<organism>
    <name type="scientific">Borreliella burgdorferi</name>
    <name type="common">Lyme disease spirochete</name>
    <name type="synonym">Borrelia burgdorferi</name>
    <dbReference type="NCBI Taxonomy" id="139"/>
    <lineage>
        <taxon>Bacteria</taxon>
        <taxon>Pseudomonadati</taxon>
        <taxon>Spirochaetota</taxon>
        <taxon>Spirochaetia</taxon>
        <taxon>Spirochaetales</taxon>
        <taxon>Borreliaceae</taxon>
        <taxon>Borreliella</taxon>
    </lineage>
</organism>
<comment type="subcellular location">
    <subcellularLocation>
        <location evidence="4">Cell outer membrane</location>
        <topology evidence="1">Lipid-anchor</topology>
    </subcellularLocation>
    <subcellularLocation>
        <location evidence="4">Cell surface</location>
    </subcellularLocation>
</comment>
<comment type="similarity">
    <text evidence="3">Belongs to the OspA lipoprotein family.</text>
</comment>
<accession>Q09089</accession>
<sequence length="273" mass="29640">MKKYLLGIGLILALIACKQNVSSLDEKNSVSVDLPGEMKVLVSKEKDKDGKYSLMATVDKLELKGTSDKSNGSGTLEGEKSDKSKAKLTISEDLSKTTFEIFKEDGKTLVSKKVNSKDKSSIEEKFNAKGELSEKTILRANGTRLEYTEIKSDGTGKAKEVLKDFALEGTLAADKTTLKVTEGTVVLSKHIPNSGEITVELNDSNSTQATKKTGKWDSNTSTLTISVNSKKTKNIVFTKEDTITVQKYDSAGTNLEGNAVEIKTLDELKNALK</sequence>
<gene>
    <name evidence="2" type="primary">ospA</name>
</gene>
<protein>
    <recommendedName>
        <fullName evidence="2">Outer surface protein A</fullName>
    </recommendedName>
</protein>
<feature type="signal peptide" evidence="1">
    <location>
        <begin position="1"/>
        <end position="16"/>
    </location>
</feature>
<feature type="chain" id="PRO_0000018078" description="Outer surface protein A" evidence="1">
    <location>
        <begin position="17"/>
        <end position="273"/>
    </location>
</feature>
<feature type="lipid moiety-binding region" description="N-palmitoyl cysteine" evidence="1">
    <location>
        <position position="17"/>
    </location>
</feature>
<feature type="lipid moiety-binding region" description="S-diacylglycerol cysteine" evidence="1">
    <location>
        <position position="17"/>
    </location>
</feature>
<dbReference type="EMBL" id="S48323">
    <property type="protein sequence ID" value="AAB23810.1"/>
    <property type="molecule type" value="Genomic_DNA"/>
</dbReference>
<dbReference type="EMBL" id="X83622">
    <property type="protein sequence ID" value="CAA58601.1"/>
    <property type="molecule type" value="Genomic_DNA"/>
</dbReference>
<dbReference type="PIR" id="S51108">
    <property type="entry name" value="S51108"/>
</dbReference>
<dbReference type="SMR" id="Q09089"/>
<dbReference type="GO" id="GO:0009279">
    <property type="term" value="C:cell outer membrane"/>
    <property type="evidence" value="ECO:0007669"/>
    <property type="project" value="UniProtKB-SubCell"/>
</dbReference>
<dbReference type="GO" id="GO:0009986">
    <property type="term" value="C:cell surface"/>
    <property type="evidence" value="ECO:0007669"/>
    <property type="project" value="UniProtKB-SubCell"/>
</dbReference>
<dbReference type="FunFam" id="2.40.128.160:FF:000001">
    <property type="entry name" value="Outer surface protein A"/>
    <property type="match status" value="1"/>
</dbReference>
<dbReference type="Gene3D" id="3.90.930.1">
    <property type="match status" value="1"/>
</dbReference>
<dbReference type="Gene3D" id="2.40.128.160">
    <property type="entry name" value="C1 set domains (antibody constant domain-like)"/>
    <property type="match status" value="1"/>
</dbReference>
<dbReference type="InterPro" id="IPR001809">
    <property type="entry name" value="OM_lipoprot_Borrelia"/>
</dbReference>
<dbReference type="InterPro" id="IPR023322">
    <property type="entry name" value="OM_lipoprot_dom_sf"/>
</dbReference>
<dbReference type="Pfam" id="PF00820">
    <property type="entry name" value="Lipoprotein_1"/>
    <property type="match status" value="1"/>
</dbReference>
<dbReference type="PRINTS" id="PR00968">
    <property type="entry name" value="OUTRSURFACE"/>
</dbReference>
<dbReference type="SUPFAM" id="SSF51087">
    <property type="entry name" value="Outer surface protein"/>
    <property type="match status" value="1"/>
</dbReference>
<dbReference type="PROSITE" id="PS51257">
    <property type="entry name" value="PROKAR_LIPOPROTEIN"/>
    <property type="match status" value="1"/>
</dbReference>
<proteinExistence type="inferred from homology"/>
<name>OSPA5_BORBG</name>
<evidence type="ECO:0000255" key="1">
    <source>
        <dbReference type="PROSITE-ProRule" id="PRU00303"/>
    </source>
</evidence>
<evidence type="ECO:0000303" key="2">
    <source>
    </source>
</evidence>
<evidence type="ECO:0000305" key="3"/>
<evidence type="ECO:0000305" key="4">
    <source>
    </source>
</evidence>
<evidence type="ECO:0000312" key="5">
    <source>
        <dbReference type="EMBL" id="AAB23810.1"/>
    </source>
</evidence>
<evidence type="ECO:0000312" key="6">
    <source>
        <dbReference type="EMBL" id="CAA58601.1"/>
    </source>
</evidence>
<reference evidence="5" key="1">
    <citation type="journal article" date="1993" name="J. Clin. Microbiol.">
        <title>An OspA serotyping system for Borrelia burgdorferi based on reactivity with monoclonal antibodies and OspA sequence analysis.</title>
        <authorList>
            <person name="Zumstein G."/>
            <person name="Fuchs R."/>
            <person name="Hofmann A."/>
            <person name="Preac-Mursic V."/>
            <person name="Soutschek E."/>
            <person name="Wilske B."/>
        </authorList>
    </citation>
    <scope>NUCLEOTIDE SEQUENCE [GENOMIC DNA]</scope>
    <source>
        <strain>PBi</strain>
    </source>
</reference>
<reference evidence="6" key="2">
    <citation type="submission" date="1995-01" db="EMBL/GenBank/DDBJ databases">
        <authorList>
            <person name="Karami A."/>
        </authorList>
    </citation>
    <scope>NUCLEOTIDE SEQUENCE [GENOMIC DNA]</scope>
    <source>
        <strain>DK6</strain>
    </source>
</reference>
<keyword id="KW-0998">Cell outer membrane</keyword>
<keyword id="KW-0449">Lipoprotein</keyword>
<keyword id="KW-0472">Membrane</keyword>
<keyword id="KW-0564">Palmitate</keyword>
<keyword id="KW-0614">Plasmid</keyword>
<keyword id="KW-0732">Signal</keyword>
<geneLocation type="plasmid">
    <name>lp54</name>
</geneLocation>